<keyword id="KW-0150">Chloroplast</keyword>
<keyword id="KW-0934">Plastid</keyword>
<keyword id="KW-0687">Ribonucleoprotein</keyword>
<keyword id="KW-0689">Ribosomal protein</keyword>
<keyword id="KW-0694">RNA-binding</keyword>
<keyword id="KW-0699">rRNA-binding</keyword>
<accession>Q3BAH4</accession>
<proteinExistence type="inferred from homology"/>
<feature type="chain" id="PRO_0000277051" description="Small ribosomal subunit protein uS7cz/uS7cy">
    <location>
        <begin position="1"/>
        <end position="155"/>
    </location>
</feature>
<geneLocation type="chloroplast"/>
<comment type="function">
    <text evidence="1">One of the primary rRNA binding proteins, it binds directly to 16S rRNA where it nucleates assembly of the head domain of the 30S subunit.</text>
</comment>
<comment type="subunit">
    <text>Part of the 30S ribosomal subunit.</text>
</comment>
<comment type="subcellular location">
    <subcellularLocation>
        <location>Plastid</location>
        <location>Chloroplast</location>
    </subcellularLocation>
</comment>
<comment type="similarity">
    <text evidence="3">Belongs to the universal ribosomal protein uS7 family.</text>
</comment>
<gene>
    <name type="primary">rps7-A</name>
</gene>
<gene>
    <name type="primary">rps7-B</name>
</gene>
<reference key="1">
    <citation type="journal article" date="2006" name="Mol. Biol. Evol.">
        <title>The chloroplast genome of Phalaenopsis aphrodite (Orchidaceae): comparative analysis of evolutionary rate with that of grasses and its phylogenetic implications.</title>
        <authorList>
            <person name="Chang C.-C."/>
            <person name="Lin H.-C."/>
            <person name="Lin I.-P."/>
            <person name="Chow T.-Y."/>
            <person name="Chen H.-H."/>
            <person name="Chen W.-H."/>
            <person name="Cheng C.-H."/>
            <person name="Lin C.-Y."/>
            <person name="Liu S.-M."/>
            <person name="Chang C.-C."/>
            <person name="Chaw S.-M."/>
        </authorList>
    </citation>
    <scope>NUCLEOTIDE SEQUENCE [LARGE SCALE GENOMIC DNA]</scope>
    <source>
        <strain>cv. Taisugar TS-97</strain>
    </source>
</reference>
<name>RR7_PHAAO</name>
<dbReference type="EMBL" id="AY916449">
    <property type="protein sequence ID" value="AAW82544.1"/>
    <property type="molecule type" value="Genomic_DNA"/>
</dbReference>
<dbReference type="EMBL" id="AY916449">
    <property type="protein sequence ID" value="AAW82549.1"/>
    <property type="molecule type" value="Genomic_DNA"/>
</dbReference>
<dbReference type="SMR" id="Q3BAH4"/>
<dbReference type="GO" id="GO:0009507">
    <property type="term" value="C:chloroplast"/>
    <property type="evidence" value="ECO:0007669"/>
    <property type="project" value="UniProtKB-SubCell"/>
</dbReference>
<dbReference type="GO" id="GO:0015935">
    <property type="term" value="C:small ribosomal subunit"/>
    <property type="evidence" value="ECO:0007669"/>
    <property type="project" value="InterPro"/>
</dbReference>
<dbReference type="GO" id="GO:0019843">
    <property type="term" value="F:rRNA binding"/>
    <property type="evidence" value="ECO:0007669"/>
    <property type="project" value="UniProtKB-UniRule"/>
</dbReference>
<dbReference type="GO" id="GO:0003735">
    <property type="term" value="F:structural constituent of ribosome"/>
    <property type="evidence" value="ECO:0007669"/>
    <property type="project" value="InterPro"/>
</dbReference>
<dbReference type="GO" id="GO:0006412">
    <property type="term" value="P:translation"/>
    <property type="evidence" value="ECO:0007669"/>
    <property type="project" value="UniProtKB-UniRule"/>
</dbReference>
<dbReference type="CDD" id="cd14871">
    <property type="entry name" value="uS7_Chloroplast"/>
    <property type="match status" value="1"/>
</dbReference>
<dbReference type="FunFam" id="1.10.455.10:FF:000001">
    <property type="entry name" value="30S ribosomal protein S7"/>
    <property type="match status" value="1"/>
</dbReference>
<dbReference type="Gene3D" id="1.10.455.10">
    <property type="entry name" value="Ribosomal protein S7 domain"/>
    <property type="match status" value="1"/>
</dbReference>
<dbReference type="HAMAP" id="MF_00480_B">
    <property type="entry name" value="Ribosomal_uS7_B"/>
    <property type="match status" value="1"/>
</dbReference>
<dbReference type="InterPro" id="IPR000235">
    <property type="entry name" value="Ribosomal_uS7"/>
</dbReference>
<dbReference type="InterPro" id="IPR005717">
    <property type="entry name" value="Ribosomal_uS7_bac/org-type"/>
</dbReference>
<dbReference type="InterPro" id="IPR020606">
    <property type="entry name" value="Ribosomal_uS7_CS"/>
</dbReference>
<dbReference type="InterPro" id="IPR023798">
    <property type="entry name" value="Ribosomal_uS7_dom"/>
</dbReference>
<dbReference type="InterPro" id="IPR036823">
    <property type="entry name" value="Ribosomal_uS7_dom_sf"/>
</dbReference>
<dbReference type="NCBIfam" id="TIGR01029">
    <property type="entry name" value="rpsG_bact"/>
    <property type="match status" value="1"/>
</dbReference>
<dbReference type="PANTHER" id="PTHR11205">
    <property type="entry name" value="RIBOSOMAL PROTEIN S7"/>
    <property type="match status" value="1"/>
</dbReference>
<dbReference type="Pfam" id="PF00177">
    <property type="entry name" value="Ribosomal_S7"/>
    <property type="match status" value="1"/>
</dbReference>
<dbReference type="PIRSF" id="PIRSF002122">
    <property type="entry name" value="RPS7p_RPS7a_RPS5e_RPS7o"/>
    <property type="match status" value="1"/>
</dbReference>
<dbReference type="SUPFAM" id="SSF47973">
    <property type="entry name" value="Ribosomal protein S7"/>
    <property type="match status" value="1"/>
</dbReference>
<dbReference type="PROSITE" id="PS00052">
    <property type="entry name" value="RIBOSOMAL_S7"/>
    <property type="match status" value="1"/>
</dbReference>
<protein>
    <recommendedName>
        <fullName evidence="2">Small ribosomal subunit protein uS7cz/uS7cy</fullName>
    </recommendedName>
    <alternativeName>
        <fullName>30S ribosomal protein S7, chloroplastic</fullName>
    </alternativeName>
</protein>
<sequence length="155" mass="17392">MSRRGTAEEKTAKSDPIYRNRLVNMLVNRILKNGKKSLAYQIIYRAVKKIQQKTETNPLSVLRQAIRGVTPDIAVKARRVGGSTHQVPIEIGSTQGKALAIRWLLGASRKRPGRNMDFRLSSELVDAAKGSGDAIRKKEETHRMAEANRAFAHFR</sequence>
<organism>
    <name type="scientific">Phalaenopsis aphrodite subsp. formosana</name>
    <name type="common">Moth orchid</name>
    <dbReference type="NCBI Taxonomy" id="308872"/>
    <lineage>
        <taxon>Eukaryota</taxon>
        <taxon>Viridiplantae</taxon>
        <taxon>Streptophyta</taxon>
        <taxon>Embryophyta</taxon>
        <taxon>Tracheophyta</taxon>
        <taxon>Spermatophyta</taxon>
        <taxon>Magnoliopsida</taxon>
        <taxon>Liliopsida</taxon>
        <taxon>Asparagales</taxon>
        <taxon>Orchidaceae</taxon>
        <taxon>Epidendroideae</taxon>
        <taxon>Vandeae</taxon>
        <taxon>Aeridinae</taxon>
        <taxon>Phalaenopsis</taxon>
    </lineage>
</organism>
<evidence type="ECO:0000250" key="1"/>
<evidence type="ECO:0000255" key="2">
    <source>
        <dbReference type="HAMAP-Rule" id="MF_00480"/>
    </source>
</evidence>
<evidence type="ECO:0000305" key="3"/>